<proteinExistence type="inferred from homology"/>
<sequence length="267" mass="30235">MIKLSIIYNEDKEDAIKIYKELLKYLKSKKEFEVLDDKNISQAEYIVVIGGDGTLLRGFKKIKDKKVKIIAINSGTLGYLTEIRKDGYKKIFENILKGKINIEERYFFTVKIGKKKYNALNEVFLTKDNIKRNIVSSEIYVDDKFLGKFKGDGVIIATPTGSTAYSLSAGGPIVTPELKLFLITPIAPHNLNTRPIILSGDVKIVLTLVGPSEFGIVNVDGHTHNKINIEDKVEISYSKESLKIVLPDDRNYYNVLREKLKWGENLC</sequence>
<organism>
    <name type="scientific">Fusobacterium nucleatum subsp. nucleatum (strain ATCC 25586 / DSM 15643 / BCRC 10681 / CIP 101130 / JCM 8532 / KCTC 2640 / LMG 13131 / VPI 4355)</name>
    <dbReference type="NCBI Taxonomy" id="190304"/>
    <lineage>
        <taxon>Bacteria</taxon>
        <taxon>Fusobacteriati</taxon>
        <taxon>Fusobacteriota</taxon>
        <taxon>Fusobacteriia</taxon>
        <taxon>Fusobacteriales</taxon>
        <taxon>Fusobacteriaceae</taxon>
        <taxon>Fusobacterium</taxon>
    </lineage>
</organism>
<keyword id="KW-0067">ATP-binding</keyword>
<keyword id="KW-0963">Cytoplasm</keyword>
<keyword id="KW-0418">Kinase</keyword>
<keyword id="KW-0520">NAD</keyword>
<keyword id="KW-0521">NADP</keyword>
<keyword id="KW-0547">Nucleotide-binding</keyword>
<keyword id="KW-1185">Reference proteome</keyword>
<keyword id="KW-0808">Transferase</keyword>
<name>NADK_FUSNN</name>
<reference key="1">
    <citation type="journal article" date="2002" name="J. Bacteriol.">
        <title>Genome sequence and analysis of the oral bacterium Fusobacterium nucleatum strain ATCC 25586.</title>
        <authorList>
            <person name="Kapatral V."/>
            <person name="Anderson I."/>
            <person name="Ivanova N."/>
            <person name="Reznik G."/>
            <person name="Los T."/>
            <person name="Lykidis A."/>
            <person name="Bhattacharyya A."/>
            <person name="Bartman A."/>
            <person name="Gardner W."/>
            <person name="Grechkin G."/>
            <person name="Zhu L."/>
            <person name="Vasieva O."/>
            <person name="Chu L."/>
            <person name="Kogan Y."/>
            <person name="Chaga O."/>
            <person name="Goltsman E."/>
            <person name="Bernal A."/>
            <person name="Larsen N."/>
            <person name="D'Souza M."/>
            <person name="Walunas T."/>
            <person name="Pusch G."/>
            <person name="Haselkorn R."/>
            <person name="Fonstein M."/>
            <person name="Kyrpides N.C."/>
            <person name="Overbeek R."/>
        </authorList>
    </citation>
    <scope>NUCLEOTIDE SEQUENCE [LARGE SCALE GENOMIC DNA]</scope>
    <source>
        <strain>ATCC 25586 / DSM 15643 / BCRC 10681 / CIP 101130 / JCM 8532 / KCTC 2640 / LMG 13131 / VPI 4355</strain>
    </source>
</reference>
<dbReference type="EC" id="2.7.1.23" evidence="1"/>
<dbReference type="EMBL" id="AE009951">
    <property type="protein sequence ID" value="AAL94473.1"/>
    <property type="molecule type" value="Genomic_DNA"/>
</dbReference>
<dbReference type="RefSeq" id="NP_603174.1">
    <property type="nucleotide sequence ID" value="NC_003454.1"/>
</dbReference>
<dbReference type="RefSeq" id="WP_011016268.1">
    <property type="nucleotide sequence ID" value="NZ_CP028101.1"/>
</dbReference>
<dbReference type="SMR" id="Q8RGM4"/>
<dbReference type="FunCoup" id="Q8RGM4">
    <property type="interactions" value="372"/>
</dbReference>
<dbReference type="STRING" id="190304.FN0267"/>
<dbReference type="PaxDb" id="190304-FN0267"/>
<dbReference type="EnsemblBacteria" id="AAL94473">
    <property type="protein sequence ID" value="AAL94473"/>
    <property type="gene ID" value="FN0267"/>
</dbReference>
<dbReference type="GeneID" id="79783279"/>
<dbReference type="KEGG" id="fnu:FN0267"/>
<dbReference type="PATRIC" id="fig|190304.8.peg.847"/>
<dbReference type="eggNOG" id="COG0061">
    <property type="taxonomic scope" value="Bacteria"/>
</dbReference>
<dbReference type="HOGENOM" id="CLU_008831_0_3_0"/>
<dbReference type="InParanoid" id="Q8RGM4"/>
<dbReference type="BioCyc" id="FNUC190304:G1FZS-866-MONOMER"/>
<dbReference type="Proteomes" id="UP000002521">
    <property type="component" value="Chromosome"/>
</dbReference>
<dbReference type="GO" id="GO:0005737">
    <property type="term" value="C:cytoplasm"/>
    <property type="evidence" value="ECO:0007669"/>
    <property type="project" value="UniProtKB-SubCell"/>
</dbReference>
<dbReference type="GO" id="GO:0005524">
    <property type="term" value="F:ATP binding"/>
    <property type="evidence" value="ECO:0007669"/>
    <property type="project" value="UniProtKB-KW"/>
</dbReference>
<dbReference type="GO" id="GO:0046872">
    <property type="term" value="F:metal ion binding"/>
    <property type="evidence" value="ECO:0007669"/>
    <property type="project" value="UniProtKB-UniRule"/>
</dbReference>
<dbReference type="GO" id="GO:0051287">
    <property type="term" value="F:NAD binding"/>
    <property type="evidence" value="ECO:0007669"/>
    <property type="project" value="UniProtKB-ARBA"/>
</dbReference>
<dbReference type="GO" id="GO:0003951">
    <property type="term" value="F:NAD+ kinase activity"/>
    <property type="evidence" value="ECO:0000318"/>
    <property type="project" value="GO_Central"/>
</dbReference>
<dbReference type="GO" id="GO:0019674">
    <property type="term" value="P:NAD metabolic process"/>
    <property type="evidence" value="ECO:0007669"/>
    <property type="project" value="InterPro"/>
</dbReference>
<dbReference type="GO" id="GO:0006741">
    <property type="term" value="P:NADP biosynthetic process"/>
    <property type="evidence" value="ECO:0000318"/>
    <property type="project" value="GO_Central"/>
</dbReference>
<dbReference type="Gene3D" id="3.40.50.10330">
    <property type="entry name" value="Probable inorganic polyphosphate/atp-NAD kinase, domain 1"/>
    <property type="match status" value="1"/>
</dbReference>
<dbReference type="Gene3D" id="2.60.200.30">
    <property type="entry name" value="Probable inorganic polyphosphate/atp-NAD kinase, domain 2"/>
    <property type="match status" value="1"/>
</dbReference>
<dbReference type="HAMAP" id="MF_00361">
    <property type="entry name" value="NAD_kinase"/>
    <property type="match status" value="1"/>
</dbReference>
<dbReference type="InterPro" id="IPR017438">
    <property type="entry name" value="ATP-NAD_kinase_N"/>
</dbReference>
<dbReference type="InterPro" id="IPR017437">
    <property type="entry name" value="ATP-NAD_kinase_PpnK-typ_C"/>
</dbReference>
<dbReference type="InterPro" id="IPR016064">
    <property type="entry name" value="NAD/diacylglycerol_kinase_sf"/>
</dbReference>
<dbReference type="InterPro" id="IPR002504">
    <property type="entry name" value="NADK"/>
</dbReference>
<dbReference type="PANTHER" id="PTHR20275">
    <property type="entry name" value="NAD KINASE"/>
    <property type="match status" value="1"/>
</dbReference>
<dbReference type="PANTHER" id="PTHR20275:SF0">
    <property type="entry name" value="NAD KINASE"/>
    <property type="match status" value="1"/>
</dbReference>
<dbReference type="Pfam" id="PF01513">
    <property type="entry name" value="NAD_kinase"/>
    <property type="match status" value="1"/>
</dbReference>
<dbReference type="Pfam" id="PF20143">
    <property type="entry name" value="NAD_kinase_C"/>
    <property type="match status" value="1"/>
</dbReference>
<dbReference type="SUPFAM" id="SSF111331">
    <property type="entry name" value="NAD kinase/diacylglycerol kinase-like"/>
    <property type="match status" value="1"/>
</dbReference>
<gene>
    <name evidence="1" type="primary">nadK</name>
    <name type="ordered locus">FN0267</name>
</gene>
<protein>
    <recommendedName>
        <fullName evidence="1">NAD kinase</fullName>
        <ecNumber evidence="1">2.7.1.23</ecNumber>
    </recommendedName>
    <alternativeName>
        <fullName evidence="1">ATP-dependent NAD kinase</fullName>
    </alternativeName>
</protein>
<feature type="chain" id="PRO_0000120620" description="NAD kinase">
    <location>
        <begin position="1"/>
        <end position="267"/>
    </location>
</feature>
<feature type="active site" description="Proton acceptor" evidence="1">
    <location>
        <position position="52"/>
    </location>
</feature>
<feature type="binding site" evidence="1">
    <location>
        <begin position="52"/>
        <end position="53"/>
    </location>
    <ligand>
        <name>NAD(+)</name>
        <dbReference type="ChEBI" id="CHEBI:57540"/>
    </ligand>
</feature>
<feature type="binding site" evidence="1">
    <location>
        <position position="57"/>
    </location>
    <ligand>
        <name>NAD(+)</name>
        <dbReference type="ChEBI" id="CHEBI:57540"/>
    </ligand>
</feature>
<feature type="binding site" evidence="1">
    <location>
        <begin position="121"/>
        <end position="122"/>
    </location>
    <ligand>
        <name>NAD(+)</name>
        <dbReference type="ChEBI" id="CHEBI:57540"/>
    </ligand>
</feature>
<feature type="binding site" evidence="1">
    <location>
        <position position="132"/>
    </location>
    <ligand>
        <name>NAD(+)</name>
        <dbReference type="ChEBI" id="CHEBI:57540"/>
    </ligand>
</feature>
<feature type="binding site" evidence="1">
    <location>
        <position position="150"/>
    </location>
    <ligand>
        <name>NAD(+)</name>
        <dbReference type="ChEBI" id="CHEBI:57540"/>
    </ligand>
</feature>
<feature type="binding site" evidence="1">
    <location>
        <position position="152"/>
    </location>
    <ligand>
        <name>NAD(+)</name>
        <dbReference type="ChEBI" id="CHEBI:57540"/>
    </ligand>
</feature>
<feature type="binding site" evidence="1">
    <location>
        <begin position="163"/>
        <end position="168"/>
    </location>
    <ligand>
        <name>NAD(+)</name>
        <dbReference type="ChEBI" id="CHEBI:57540"/>
    </ligand>
</feature>
<feature type="binding site" evidence="1">
    <location>
        <position position="187"/>
    </location>
    <ligand>
        <name>NAD(+)</name>
        <dbReference type="ChEBI" id="CHEBI:57540"/>
    </ligand>
</feature>
<evidence type="ECO:0000255" key="1">
    <source>
        <dbReference type="HAMAP-Rule" id="MF_00361"/>
    </source>
</evidence>
<comment type="function">
    <text evidence="1">Involved in the regulation of the intracellular balance of NAD and NADP, and is a key enzyme in the biosynthesis of NADP. Catalyzes specifically the phosphorylation on 2'-hydroxyl of the adenosine moiety of NAD to yield NADP.</text>
</comment>
<comment type="catalytic activity">
    <reaction evidence="1">
        <text>NAD(+) + ATP = ADP + NADP(+) + H(+)</text>
        <dbReference type="Rhea" id="RHEA:18629"/>
        <dbReference type="ChEBI" id="CHEBI:15378"/>
        <dbReference type="ChEBI" id="CHEBI:30616"/>
        <dbReference type="ChEBI" id="CHEBI:57540"/>
        <dbReference type="ChEBI" id="CHEBI:58349"/>
        <dbReference type="ChEBI" id="CHEBI:456216"/>
        <dbReference type="EC" id="2.7.1.23"/>
    </reaction>
</comment>
<comment type="cofactor">
    <cofactor evidence="1">
        <name>a divalent metal cation</name>
        <dbReference type="ChEBI" id="CHEBI:60240"/>
    </cofactor>
</comment>
<comment type="subcellular location">
    <subcellularLocation>
        <location evidence="1">Cytoplasm</location>
    </subcellularLocation>
</comment>
<comment type="similarity">
    <text evidence="1">Belongs to the NAD kinase family.</text>
</comment>
<accession>Q8RGM4</accession>